<proteinExistence type="inferred from homology"/>
<accession>A8F2D4</accession>
<dbReference type="EMBL" id="CP000683">
    <property type="protein sequence ID" value="ABV85070.1"/>
    <property type="status" value="ALT_INIT"/>
    <property type="molecule type" value="Genomic_DNA"/>
</dbReference>
<dbReference type="RefSeq" id="WP_008580947.1">
    <property type="nucleotide sequence ID" value="NC_009900.1"/>
</dbReference>
<dbReference type="SMR" id="A8F2D4"/>
<dbReference type="GeneID" id="928139"/>
<dbReference type="KEGG" id="rms:RMA_1027"/>
<dbReference type="HOGENOM" id="CLU_139869_0_1_5"/>
<dbReference type="Proteomes" id="UP000001311">
    <property type="component" value="Chromosome"/>
</dbReference>
<dbReference type="GO" id="GO:0005737">
    <property type="term" value="C:cytoplasm"/>
    <property type="evidence" value="ECO:0007669"/>
    <property type="project" value="UniProtKB-ARBA"/>
</dbReference>
<dbReference type="GO" id="GO:0015935">
    <property type="term" value="C:small ribosomal subunit"/>
    <property type="evidence" value="ECO:0007669"/>
    <property type="project" value="TreeGrafter"/>
</dbReference>
<dbReference type="GO" id="GO:0019843">
    <property type="term" value="F:rRNA binding"/>
    <property type="evidence" value="ECO:0007669"/>
    <property type="project" value="UniProtKB-UniRule"/>
</dbReference>
<dbReference type="GO" id="GO:0003735">
    <property type="term" value="F:structural constituent of ribosome"/>
    <property type="evidence" value="ECO:0007669"/>
    <property type="project" value="InterPro"/>
</dbReference>
<dbReference type="GO" id="GO:0006412">
    <property type="term" value="P:translation"/>
    <property type="evidence" value="ECO:0007669"/>
    <property type="project" value="UniProtKB-UniRule"/>
</dbReference>
<dbReference type="FunFam" id="1.10.287.1480:FF:000001">
    <property type="entry name" value="30S ribosomal protein S14"/>
    <property type="match status" value="1"/>
</dbReference>
<dbReference type="Gene3D" id="1.10.287.1480">
    <property type="match status" value="1"/>
</dbReference>
<dbReference type="HAMAP" id="MF_00537">
    <property type="entry name" value="Ribosomal_uS14_1"/>
    <property type="match status" value="1"/>
</dbReference>
<dbReference type="InterPro" id="IPR001209">
    <property type="entry name" value="Ribosomal_uS14"/>
</dbReference>
<dbReference type="InterPro" id="IPR023036">
    <property type="entry name" value="Ribosomal_uS14_bac/plastid"/>
</dbReference>
<dbReference type="InterPro" id="IPR018271">
    <property type="entry name" value="Ribosomal_uS14_CS"/>
</dbReference>
<dbReference type="NCBIfam" id="NF006477">
    <property type="entry name" value="PRK08881.1"/>
    <property type="match status" value="1"/>
</dbReference>
<dbReference type="PANTHER" id="PTHR19836">
    <property type="entry name" value="30S RIBOSOMAL PROTEIN S14"/>
    <property type="match status" value="1"/>
</dbReference>
<dbReference type="PANTHER" id="PTHR19836:SF19">
    <property type="entry name" value="SMALL RIBOSOMAL SUBUNIT PROTEIN US14M"/>
    <property type="match status" value="1"/>
</dbReference>
<dbReference type="Pfam" id="PF00253">
    <property type="entry name" value="Ribosomal_S14"/>
    <property type="match status" value="1"/>
</dbReference>
<dbReference type="SUPFAM" id="SSF57716">
    <property type="entry name" value="Glucocorticoid receptor-like (DNA-binding domain)"/>
    <property type="match status" value="1"/>
</dbReference>
<dbReference type="PROSITE" id="PS00527">
    <property type="entry name" value="RIBOSOMAL_S14"/>
    <property type="match status" value="1"/>
</dbReference>
<gene>
    <name evidence="1" type="primary">rpsN</name>
    <name type="ordered locus">RMA_1027</name>
</gene>
<keyword id="KW-0687">Ribonucleoprotein</keyword>
<keyword id="KW-0689">Ribosomal protein</keyword>
<keyword id="KW-0694">RNA-binding</keyword>
<keyword id="KW-0699">rRNA-binding</keyword>
<reference key="1">
    <citation type="journal article" date="2007" name="Genome Res.">
        <title>Lateral gene transfer between obligate intracellular bacteria: evidence from the Rickettsia massiliae genome.</title>
        <authorList>
            <person name="Blanc G."/>
            <person name="Ogata H."/>
            <person name="Robert C."/>
            <person name="Audic S."/>
            <person name="Claverie J.-M."/>
            <person name="Raoult D."/>
        </authorList>
    </citation>
    <scope>NUCLEOTIDE SEQUENCE [LARGE SCALE GENOMIC DNA]</scope>
    <source>
        <strain>Mtu5</strain>
    </source>
</reference>
<evidence type="ECO:0000255" key="1">
    <source>
        <dbReference type="HAMAP-Rule" id="MF_00537"/>
    </source>
</evidence>
<evidence type="ECO:0000256" key="2">
    <source>
        <dbReference type="SAM" id="MobiDB-lite"/>
    </source>
</evidence>
<evidence type="ECO:0000305" key="3"/>
<organism>
    <name type="scientific">Rickettsia massiliae (strain Mtu5)</name>
    <dbReference type="NCBI Taxonomy" id="416276"/>
    <lineage>
        <taxon>Bacteria</taxon>
        <taxon>Pseudomonadati</taxon>
        <taxon>Pseudomonadota</taxon>
        <taxon>Alphaproteobacteria</taxon>
        <taxon>Rickettsiales</taxon>
        <taxon>Rickettsiaceae</taxon>
        <taxon>Rickettsieae</taxon>
        <taxon>Rickettsia</taxon>
        <taxon>spotted fever group</taxon>
    </lineage>
</organism>
<sequence>MAKVSSIKKNESRKKKSQSLHNKRLALKSKIYDKNISLEERFSLVMSLAQLPRNSSSTRIRNRCELTGRPRGVTRKFGISRNKLRELIGRGLVPGVVKSSW</sequence>
<feature type="chain" id="PRO_0000354392" description="Small ribosomal subunit protein uS14">
    <location>
        <begin position="1"/>
        <end position="101"/>
    </location>
</feature>
<feature type="region of interest" description="Disordered" evidence="2">
    <location>
        <begin position="1"/>
        <end position="22"/>
    </location>
</feature>
<feature type="compositionally biased region" description="Basic residues" evidence="2">
    <location>
        <begin position="11"/>
        <end position="22"/>
    </location>
</feature>
<name>RS14_RICM5</name>
<comment type="function">
    <text evidence="1">Binds 16S rRNA, required for the assembly of 30S particles and may also be responsible for determining the conformation of the 16S rRNA at the A site.</text>
</comment>
<comment type="subunit">
    <text evidence="1">Part of the 30S ribosomal subunit. Contacts proteins S3 and S10.</text>
</comment>
<comment type="similarity">
    <text evidence="1">Belongs to the universal ribosomal protein uS14 family.</text>
</comment>
<comment type="sequence caution" evidence="3">
    <conflict type="erroneous initiation">
        <sequence resource="EMBL-CDS" id="ABV85070"/>
    </conflict>
</comment>
<protein>
    <recommendedName>
        <fullName evidence="1">Small ribosomal subunit protein uS14</fullName>
    </recommendedName>
    <alternativeName>
        <fullName evidence="3">30S ribosomal protein S14</fullName>
    </alternativeName>
</protein>